<protein>
    <recommendedName>
        <fullName>Disintegrin and metalloproteinase domain-containing protein 20</fullName>
        <shortName>ADAM 20</shortName>
        <ecNumber>3.4.24.-</ecNumber>
    </recommendedName>
</protein>
<sequence length="726" mass="81603">MAVGEPLVHIRVTLLLLWFGMFLSISGHSQARPSQYFTSPEVVIPLKVISRGRGAKAPGWLSYSLRFGGQRYIVHMRVNKLLFAAHLPVFTYTEQHALLQDQPFIQDDCYYHGYVEGVPESLVALSTCSGGFLGMLQINDLVYEIKPISVSATFEHLVYKIDSDDTQFPPMRCGLTEEKIAHQMELQLSYNFTLKQSSFVGWWTHQRFVELVVVVDNIRYLFSQSNATTVQHEVFNVVNIVDSFYHPLEVDVILTGIDIWTASNPLPTSGDLDNVLEDFSIWKNYNLNNRLQHDVAHLFIKDTQGMKLGVAYVKGICQNPFNTGVDVFEDNRLVVFAITLGHELGHNLGMQHDTQWCVCELQWCIMHAYRKVTTKFSNCSYAQYWDSTISSGLCIQPPPYPGNIFRLKYCGNLVVEEGEECDCGTIRQCAKDPCCLLNCTLHPGAACAFGICCKDCKFLPSGTLCRQQVGECDLPEWCNGTSHQCPDDVYVQDGISCNVNAFCYEKTCNNHDIQCKEIFGQDARSASQSCYQEINTQGNRFGHCGIVGTTYVKCWTPDIMCGRVQCENVGVIPNLIEHSTVQQFHLNDTTCWGTDYHLGMAIPDIGEVKDGTVCGPEKICIRKKCASMVHLSQACQPKTCNMRGICNNKQHCHCNHEWAPPYCKDKGYGGSADSGPPPKNNMEGLNVMGKLRYLSLLCLLPLVAFLLFCLHVLFKKRTKSKEDEEG</sequence>
<name>ADA20_HUMAN</name>
<proteinExistence type="evidence at transcript level"/>
<gene>
    <name type="primary">ADAM20</name>
</gene>
<keyword id="KW-1015">Disulfide bond</keyword>
<keyword id="KW-0245">EGF-like domain</keyword>
<keyword id="KW-0325">Glycoprotein</keyword>
<keyword id="KW-0378">Hydrolase</keyword>
<keyword id="KW-0472">Membrane</keyword>
<keyword id="KW-0479">Metal-binding</keyword>
<keyword id="KW-0482">Metalloprotease</keyword>
<keyword id="KW-0645">Protease</keyword>
<keyword id="KW-1185">Reference proteome</keyword>
<keyword id="KW-0732">Signal</keyword>
<keyword id="KW-0812">Transmembrane</keyword>
<keyword id="KW-1133">Transmembrane helix</keyword>
<keyword id="KW-0862">Zinc</keyword>
<keyword id="KW-0865">Zymogen</keyword>
<evidence type="ECO:0000250" key="1"/>
<evidence type="ECO:0000255" key="2"/>
<evidence type="ECO:0000255" key="3">
    <source>
        <dbReference type="PROSITE-ProRule" id="PRU00068"/>
    </source>
</evidence>
<evidence type="ECO:0000255" key="4">
    <source>
        <dbReference type="PROSITE-ProRule" id="PRU00276"/>
    </source>
</evidence>
<evidence type="ECO:0000255" key="5">
    <source>
        <dbReference type="PROSITE-ProRule" id="PRU10095"/>
    </source>
</evidence>
<evidence type="ECO:0000269" key="6">
    <source>
    </source>
</evidence>
<evidence type="ECO:0000305" key="7"/>
<reference key="1">
    <citation type="journal article" date="1998" name="Gene">
        <title>ADAM 20 and 21; two novel human testis-specific membrane metalloproteases with similarity to fertilin-alpha.</title>
        <authorList>
            <person name="Hooft van Huijsduijnen R."/>
        </authorList>
    </citation>
    <scope>NUCLEOTIDE SEQUENCE [MRNA]</scope>
    <scope>VARIANT LEU-19</scope>
    <source>
        <tissue>Testis</tissue>
    </source>
</reference>
<reference key="2">
    <citation type="journal article" date="1999" name="Gene">
        <title>The identification of seven metalloproteinase-disintegrin (ADAM) genes from genomic libraries.</title>
        <authorList>
            <person name="Poindexter K."/>
            <person name="Nelson N."/>
            <person name="DuBose R.F."/>
            <person name="Black R.A."/>
            <person name="Cerretti D.P."/>
        </authorList>
    </citation>
    <scope>NUCLEOTIDE SEQUENCE [GENOMIC DNA]</scope>
</reference>
<reference key="3">
    <citation type="journal article" date="2003" name="Nature">
        <title>The DNA sequence and analysis of human chromosome 14.</title>
        <authorList>
            <person name="Heilig R."/>
            <person name="Eckenberg R."/>
            <person name="Petit J.-L."/>
            <person name="Fonknechten N."/>
            <person name="Da Silva C."/>
            <person name="Cattolico L."/>
            <person name="Levy M."/>
            <person name="Barbe V."/>
            <person name="De Berardinis V."/>
            <person name="Ureta-Vidal A."/>
            <person name="Pelletier E."/>
            <person name="Vico V."/>
            <person name="Anthouard V."/>
            <person name="Rowen L."/>
            <person name="Madan A."/>
            <person name="Qin S."/>
            <person name="Sun H."/>
            <person name="Du H."/>
            <person name="Pepin K."/>
            <person name="Artiguenave F."/>
            <person name="Robert C."/>
            <person name="Cruaud C."/>
            <person name="Bruels T."/>
            <person name="Jaillon O."/>
            <person name="Friedlander L."/>
            <person name="Samson G."/>
            <person name="Brottier P."/>
            <person name="Cure S."/>
            <person name="Segurens B."/>
            <person name="Aniere F."/>
            <person name="Samain S."/>
            <person name="Crespeau H."/>
            <person name="Abbasi N."/>
            <person name="Aiach N."/>
            <person name="Boscus D."/>
            <person name="Dickhoff R."/>
            <person name="Dors M."/>
            <person name="Dubois I."/>
            <person name="Friedman C."/>
            <person name="Gouyvenoux M."/>
            <person name="James R."/>
            <person name="Madan A."/>
            <person name="Mairey-Estrada B."/>
            <person name="Mangenot S."/>
            <person name="Martins N."/>
            <person name="Menard M."/>
            <person name="Oztas S."/>
            <person name="Ratcliffe A."/>
            <person name="Shaffer T."/>
            <person name="Trask B."/>
            <person name="Vacherie B."/>
            <person name="Bellemere C."/>
            <person name="Belser C."/>
            <person name="Besnard-Gonnet M."/>
            <person name="Bartol-Mavel D."/>
            <person name="Boutard M."/>
            <person name="Briez-Silla S."/>
            <person name="Combette S."/>
            <person name="Dufosse-Laurent V."/>
            <person name="Ferron C."/>
            <person name="Lechaplais C."/>
            <person name="Louesse C."/>
            <person name="Muselet D."/>
            <person name="Magdelenat G."/>
            <person name="Pateau E."/>
            <person name="Petit E."/>
            <person name="Sirvain-Trukniewicz P."/>
            <person name="Trybou A."/>
            <person name="Vega-Czarny N."/>
            <person name="Bataille E."/>
            <person name="Bluet E."/>
            <person name="Bordelais I."/>
            <person name="Dubois M."/>
            <person name="Dumont C."/>
            <person name="Guerin T."/>
            <person name="Haffray S."/>
            <person name="Hammadi R."/>
            <person name="Muanga J."/>
            <person name="Pellouin V."/>
            <person name="Robert D."/>
            <person name="Wunderle E."/>
            <person name="Gauguet G."/>
            <person name="Roy A."/>
            <person name="Sainte-Marthe L."/>
            <person name="Verdier J."/>
            <person name="Verdier-Discala C."/>
            <person name="Hillier L.W."/>
            <person name="Fulton L."/>
            <person name="McPherson J."/>
            <person name="Matsuda F."/>
            <person name="Wilson R."/>
            <person name="Scarpelli C."/>
            <person name="Gyapay G."/>
            <person name="Wincker P."/>
            <person name="Saurin W."/>
            <person name="Quetier F."/>
            <person name="Waterston R."/>
            <person name="Hood L."/>
            <person name="Weissenbach J."/>
        </authorList>
    </citation>
    <scope>NUCLEOTIDE SEQUENCE [LARGE SCALE GENOMIC DNA]</scope>
</reference>
<reference key="4">
    <citation type="submission" date="2005-07" db="EMBL/GenBank/DDBJ databases">
        <authorList>
            <person name="Mural R.J."/>
            <person name="Istrail S."/>
            <person name="Sutton G.G."/>
            <person name="Florea L."/>
            <person name="Halpern A.L."/>
            <person name="Mobarry C.M."/>
            <person name="Lippert R."/>
            <person name="Walenz B."/>
            <person name="Shatkay H."/>
            <person name="Dew I."/>
            <person name="Miller J.R."/>
            <person name="Flanigan M.J."/>
            <person name="Edwards N.J."/>
            <person name="Bolanos R."/>
            <person name="Fasulo D."/>
            <person name="Halldorsson B.V."/>
            <person name="Hannenhalli S."/>
            <person name="Turner R."/>
            <person name="Yooseph S."/>
            <person name="Lu F."/>
            <person name="Nusskern D.R."/>
            <person name="Shue B.C."/>
            <person name="Zheng X.H."/>
            <person name="Zhong F."/>
            <person name="Delcher A.L."/>
            <person name="Huson D.H."/>
            <person name="Kravitz S.A."/>
            <person name="Mouchard L."/>
            <person name="Reinert K."/>
            <person name="Remington K.A."/>
            <person name="Clark A.G."/>
            <person name="Waterman M.S."/>
            <person name="Eichler E.E."/>
            <person name="Adams M.D."/>
            <person name="Hunkapiller M.W."/>
            <person name="Myers E.W."/>
            <person name="Venter J.C."/>
        </authorList>
    </citation>
    <scope>NUCLEOTIDE SEQUENCE [LARGE SCALE GENOMIC DNA]</scope>
</reference>
<reference key="5">
    <citation type="journal article" date="2004" name="Genome Res.">
        <title>The status, quality, and expansion of the NIH full-length cDNA project: the Mammalian Gene Collection (MGC).</title>
        <authorList>
            <consortium name="The MGC Project Team"/>
        </authorList>
    </citation>
    <scope>NUCLEOTIDE SEQUENCE [LARGE SCALE MRNA]</scope>
    <source>
        <tissue>Testis</tissue>
    </source>
</reference>
<accession>O43506</accession>
<accession>Q6GTZ1</accession>
<accession>Q9UKJ9</accession>
<dbReference type="EC" id="3.4.24.-"/>
<dbReference type="EMBL" id="AF029899">
    <property type="protein sequence ID" value="AAC52041.1"/>
    <property type="molecule type" value="mRNA"/>
</dbReference>
<dbReference type="EMBL" id="AF158643">
    <property type="protein sequence ID" value="AAD55254.1"/>
    <property type="molecule type" value="Genomic_DNA"/>
</dbReference>
<dbReference type="EMBL" id="AL357153">
    <property type="status" value="NOT_ANNOTATED_CDS"/>
    <property type="molecule type" value="Genomic_DNA"/>
</dbReference>
<dbReference type="EMBL" id="CH471061">
    <property type="protein sequence ID" value="EAW81037.1"/>
    <property type="status" value="ALT_INIT"/>
    <property type="molecule type" value="Genomic_DNA"/>
</dbReference>
<dbReference type="EMBL" id="BC025378">
    <property type="protein sequence ID" value="AAH25378.2"/>
    <property type="status" value="ALT_INIT"/>
    <property type="molecule type" value="mRNA"/>
</dbReference>
<dbReference type="CCDS" id="CCDS32111.2"/>
<dbReference type="RefSeq" id="NP_003805.3">
    <property type="nucleotide sequence ID" value="NM_003814.4"/>
</dbReference>
<dbReference type="RefSeq" id="XP_005268208.1">
    <property type="nucleotide sequence ID" value="XM_005268151.3"/>
</dbReference>
<dbReference type="SMR" id="O43506"/>
<dbReference type="BioGRID" id="114284">
    <property type="interactions" value="3"/>
</dbReference>
<dbReference type="FunCoup" id="O43506">
    <property type="interactions" value="5"/>
</dbReference>
<dbReference type="IntAct" id="O43506">
    <property type="interactions" value="1"/>
</dbReference>
<dbReference type="MINT" id="O43506"/>
<dbReference type="STRING" id="9606.ENSP00000498512"/>
<dbReference type="MEROPS" id="M12.218"/>
<dbReference type="GlyCosmos" id="O43506">
    <property type="glycosylation" value="6 sites, No reported glycans"/>
</dbReference>
<dbReference type="GlyGen" id="O43506">
    <property type="glycosylation" value="7 sites"/>
</dbReference>
<dbReference type="iPTMnet" id="O43506"/>
<dbReference type="PhosphoSitePlus" id="O43506"/>
<dbReference type="BioMuta" id="ADAM20"/>
<dbReference type="MassIVE" id="O43506"/>
<dbReference type="PaxDb" id="9606-ENSP00000256389"/>
<dbReference type="PeptideAtlas" id="O43506"/>
<dbReference type="Antibodypedia" id="25132">
    <property type="antibodies" value="166 antibodies from 24 providers"/>
</dbReference>
<dbReference type="DNASU" id="8748"/>
<dbReference type="Ensembl" id="ENST00000256389.5">
    <property type="protein sequence ID" value="ENSP00000256389.3"/>
    <property type="gene ID" value="ENSG00000134007.5"/>
</dbReference>
<dbReference type="GeneID" id="8748"/>
<dbReference type="KEGG" id="hsa:8748"/>
<dbReference type="MANE-Select" id="ENST00000256389.5">
    <property type="protein sequence ID" value="ENSP00000256389.3"/>
    <property type="RefSeq nucleotide sequence ID" value="NM_003814.5"/>
    <property type="RefSeq protein sequence ID" value="NP_003805.4"/>
</dbReference>
<dbReference type="UCSC" id="uc001xme.4">
    <property type="organism name" value="human"/>
</dbReference>
<dbReference type="AGR" id="HGNC:199"/>
<dbReference type="CTD" id="8748"/>
<dbReference type="DisGeNET" id="8748"/>
<dbReference type="GeneCards" id="ADAM20"/>
<dbReference type="HGNC" id="HGNC:199">
    <property type="gene designation" value="ADAM20"/>
</dbReference>
<dbReference type="HPA" id="ENSG00000134007">
    <property type="expression patterns" value="Tissue enriched (testis)"/>
</dbReference>
<dbReference type="MIM" id="603712">
    <property type="type" value="gene"/>
</dbReference>
<dbReference type="neXtProt" id="NX_O43506"/>
<dbReference type="OpenTargets" id="ENSG00000134007"/>
<dbReference type="PharmGKB" id="PA24516"/>
<dbReference type="VEuPathDB" id="HostDB:ENSG00000134007"/>
<dbReference type="eggNOG" id="KOG3607">
    <property type="taxonomic scope" value="Eukaryota"/>
</dbReference>
<dbReference type="GeneTree" id="ENSGT00940000161067"/>
<dbReference type="HOGENOM" id="CLU_012714_4_0_1"/>
<dbReference type="InParanoid" id="O43506"/>
<dbReference type="OrthoDB" id="5951731at2759"/>
<dbReference type="PAN-GO" id="O43506">
    <property type="GO annotations" value="4 GO annotations based on evolutionary models"/>
</dbReference>
<dbReference type="PhylomeDB" id="O43506"/>
<dbReference type="TreeFam" id="TF314733"/>
<dbReference type="PathwayCommons" id="O43506"/>
<dbReference type="Reactome" id="R-HSA-2534343">
    <property type="pathway name" value="Interaction With Cumulus Cells And The Zona Pellucida"/>
</dbReference>
<dbReference type="SignaLink" id="O43506"/>
<dbReference type="BioGRID-ORCS" id="8748">
    <property type="hits" value="8 hits in 1141 CRISPR screens"/>
</dbReference>
<dbReference type="ChiTaRS" id="ADAM20">
    <property type="organism name" value="human"/>
</dbReference>
<dbReference type="GenomeRNAi" id="8748"/>
<dbReference type="Pharos" id="O43506">
    <property type="development level" value="Tdark"/>
</dbReference>
<dbReference type="PRO" id="PR:O43506"/>
<dbReference type="Proteomes" id="UP000005640">
    <property type="component" value="Chromosome 14"/>
</dbReference>
<dbReference type="RNAct" id="O43506">
    <property type="molecule type" value="protein"/>
</dbReference>
<dbReference type="Bgee" id="ENSG00000134007">
    <property type="expression patterns" value="Expressed in sperm and 37 other cell types or tissues"/>
</dbReference>
<dbReference type="ExpressionAtlas" id="O43506">
    <property type="expression patterns" value="baseline and differential"/>
</dbReference>
<dbReference type="GO" id="GO:0009897">
    <property type="term" value="C:external side of plasma membrane"/>
    <property type="evidence" value="ECO:0000318"/>
    <property type="project" value="GO_Central"/>
</dbReference>
<dbReference type="GO" id="GO:0005886">
    <property type="term" value="C:plasma membrane"/>
    <property type="evidence" value="ECO:0000318"/>
    <property type="project" value="GO_Central"/>
</dbReference>
<dbReference type="GO" id="GO:1990913">
    <property type="term" value="C:sperm head plasma membrane"/>
    <property type="evidence" value="ECO:0000318"/>
    <property type="project" value="GO_Central"/>
</dbReference>
<dbReference type="GO" id="GO:0046872">
    <property type="term" value="F:metal ion binding"/>
    <property type="evidence" value="ECO:0007669"/>
    <property type="project" value="UniProtKB-KW"/>
</dbReference>
<dbReference type="GO" id="GO:0004222">
    <property type="term" value="F:metalloendopeptidase activity"/>
    <property type="evidence" value="ECO:0000318"/>
    <property type="project" value="GO_Central"/>
</dbReference>
<dbReference type="GO" id="GO:0008237">
    <property type="term" value="F:metallopeptidase activity"/>
    <property type="evidence" value="ECO:0000304"/>
    <property type="project" value="ProtInc"/>
</dbReference>
<dbReference type="GO" id="GO:0008584">
    <property type="term" value="P:male gonad development"/>
    <property type="evidence" value="ECO:0000318"/>
    <property type="project" value="GO_Central"/>
</dbReference>
<dbReference type="GO" id="GO:0006508">
    <property type="term" value="P:proteolysis"/>
    <property type="evidence" value="ECO:0000318"/>
    <property type="project" value="GO_Central"/>
</dbReference>
<dbReference type="GO" id="GO:0007338">
    <property type="term" value="P:single fertilization"/>
    <property type="evidence" value="ECO:0000304"/>
    <property type="project" value="ProtInc"/>
</dbReference>
<dbReference type="CDD" id="cd04269">
    <property type="entry name" value="ZnMc_adamalysin_II_like"/>
    <property type="match status" value="1"/>
</dbReference>
<dbReference type="FunFam" id="3.40.390.10:FF:000002">
    <property type="entry name" value="Disintegrin and metalloproteinase domain-containing protein 22"/>
    <property type="match status" value="1"/>
</dbReference>
<dbReference type="FunFam" id="4.10.70.10:FF:000001">
    <property type="entry name" value="Disintegrin and metalloproteinase domain-containing protein 22"/>
    <property type="match status" value="1"/>
</dbReference>
<dbReference type="Gene3D" id="3.40.390.10">
    <property type="entry name" value="Collagenase (Catalytic Domain)"/>
    <property type="match status" value="1"/>
</dbReference>
<dbReference type="Gene3D" id="4.10.70.10">
    <property type="entry name" value="Disintegrin domain"/>
    <property type="match status" value="1"/>
</dbReference>
<dbReference type="InterPro" id="IPR006586">
    <property type="entry name" value="ADAM_Cys-rich"/>
</dbReference>
<dbReference type="InterPro" id="IPR018358">
    <property type="entry name" value="Disintegrin_CS"/>
</dbReference>
<dbReference type="InterPro" id="IPR001762">
    <property type="entry name" value="Disintegrin_dom"/>
</dbReference>
<dbReference type="InterPro" id="IPR036436">
    <property type="entry name" value="Disintegrin_dom_sf"/>
</dbReference>
<dbReference type="InterPro" id="IPR024079">
    <property type="entry name" value="MetalloPept_cat_dom_sf"/>
</dbReference>
<dbReference type="InterPro" id="IPR001590">
    <property type="entry name" value="Peptidase_M12B"/>
</dbReference>
<dbReference type="InterPro" id="IPR002870">
    <property type="entry name" value="Peptidase_M12B_N"/>
</dbReference>
<dbReference type="InterPro" id="IPR034027">
    <property type="entry name" value="Reprolysin_adamalysin"/>
</dbReference>
<dbReference type="PANTHER" id="PTHR11905">
    <property type="entry name" value="ADAM A DISINTEGRIN AND METALLOPROTEASE DOMAIN"/>
    <property type="match status" value="1"/>
</dbReference>
<dbReference type="PANTHER" id="PTHR11905:SF232">
    <property type="entry name" value="DISINTEGRIN AND METALLOPROTEINASE DOMAIN-CONTAINING PROTEIN 20"/>
    <property type="match status" value="1"/>
</dbReference>
<dbReference type="Pfam" id="PF08516">
    <property type="entry name" value="ADAM_CR"/>
    <property type="match status" value="1"/>
</dbReference>
<dbReference type="Pfam" id="PF00200">
    <property type="entry name" value="Disintegrin"/>
    <property type="match status" value="1"/>
</dbReference>
<dbReference type="Pfam" id="PF01562">
    <property type="entry name" value="Pep_M12B_propep"/>
    <property type="match status" value="1"/>
</dbReference>
<dbReference type="Pfam" id="PF01421">
    <property type="entry name" value="Reprolysin"/>
    <property type="match status" value="1"/>
</dbReference>
<dbReference type="PRINTS" id="PR00289">
    <property type="entry name" value="DISINTEGRIN"/>
</dbReference>
<dbReference type="SMART" id="SM00608">
    <property type="entry name" value="ACR"/>
    <property type="match status" value="1"/>
</dbReference>
<dbReference type="SMART" id="SM00050">
    <property type="entry name" value="DISIN"/>
    <property type="match status" value="1"/>
</dbReference>
<dbReference type="SUPFAM" id="SSF57552">
    <property type="entry name" value="Blood coagulation inhibitor (disintegrin)"/>
    <property type="match status" value="1"/>
</dbReference>
<dbReference type="SUPFAM" id="SSF55486">
    <property type="entry name" value="Metalloproteases ('zincins'), catalytic domain"/>
    <property type="match status" value="1"/>
</dbReference>
<dbReference type="PROSITE" id="PS50215">
    <property type="entry name" value="ADAM_MEPRO"/>
    <property type="match status" value="1"/>
</dbReference>
<dbReference type="PROSITE" id="PS00427">
    <property type="entry name" value="DISINTEGRIN_1"/>
    <property type="match status" value="1"/>
</dbReference>
<dbReference type="PROSITE" id="PS50214">
    <property type="entry name" value="DISINTEGRIN_2"/>
    <property type="match status" value="1"/>
</dbReference>
<dbReference type="PROSITE" id="PS00142">
    <property type="entry name" value="ZINC_PROTEASE"/>
    <property type="match status" value="1"/>
</dbReference>
<comment type="function">
    <text>May be involved in sperm maturation and/or fertilization.</text>
</comment>
<comment type="cofactor">
    <cofactor evidence="7">
        <name>Zn(2+)</name>
        <dbReference type="ChEBI" id="CHEBI:29105"/>
    </cofactor>
    <text evidence="7">Binds 1 zinc ion per subunit.</text>
</comment>
<comment type="subcellular location">
    <subcellularLocation>
        <location>Membrane</location>
        <topology>Single-pass type I membrane protein</topology>
    </subcellularLocation>
</comment>
<comment type="tissue specificity">
    <text>Testis specific.</text>
</comment>
<comment type="domain">
    <text>A tripeptide motif (VGE) within disintegrin-like domain could be involved in the binding to egg integrin receptor and thus could mediate sperm/egg binding.</text>
</comment>
<comment type="domain">
    <text>The cysteine-rich domain encodes putative cell-fusion peptides, which could be involved in sperm-egg fusion.</text>
</comment>
<comment type="domain">
    <text>The conserved cysteine present in the cysteine-switch motif binds the catalytic zinc ion, thus inhibiting the enzyme. The dissociation of the cysteine from the zinc ion upon the activation-peptide release activates the enzyme.</text>
</comment>
<comment type="PTM">
    <text>Has no obvious cleavage site for furin endopeptidase, suggesting that the proteolytic processing is regulated.</text>
</comment>
<comment type="miscellaneous">
    <text>May be the functional equivalent of ADAM 1/fertilin alpha which is a pseudogene in human.</text>
</comment>
<comment type="sequence caution" evidence="7">
    <conflict type="erroneous initiation">
        <sequence resource="EMBL-CDS" id="AAH25378"/>
    </conflict>
    <text>Extended N-terminus.</text>
</comment>
<comment type="sequence caution" evidence="7">
    <conflict type="erroneous initiation">
        <sequence resource="EMBL-CDS" id="AAH25378"/>
    </conflict>
</comment>
<comment type="sequence caution" evidence="7">
    <conflict type="erroneous initiation">
        <sequence resource="EMBL-CDS" id="EAW81037"/>
    </conflict>
    <text>Extended N-terminus.</text>
</comment>
<feature type="signal peptide" evidence="2">
    <location>
        <begin position="1"/>
        <end position="31"/>
    </location>
</feature>
<feature type="propeptide" id="PRO_0000029106" evidence="2">
    <location>
        <begin position="32"/>
        <end position="206"/>
    </location>
</feature>
<feature type="chain" id="PRO_0000029107" description="Disintegrin and metalloproteinase domain-containing protein 20">
    <location>
        <begin position="207"/>
        <end position="726"/>
    </location>
</feature>
<feature type="topological domain" description="Extracellular" evidence="2">
    <location>
        <begin position="207"/>
        <end position="693"/>
    </location>
</feature>
<feature type="transmembrane region" description="Helical" evidence="2">
    <location>
        <begin position="694"/>
        <end position="714"/>
    </location>
</feature>
<feature type="topological domain" description="Cytoplasmic" evidence="2">
    <location>
        <begin position="715"/>
        <end position="726"/>
    </location>
</feature>
<feature type="domain" description="Peptidase M12B" evidence="4">
    <location>
        <begin position="207"/>
        <end position="400"/>
    </location>
</feature>
<feature type="domain" description="Disintegrin" evidence="3">
    <location>
        <begin position="407"/>
        <end position="493"/>
    </location>
</feature>
<feature type="domain" description="EGF-like">
    <location>
        <begin position="635"/>
        <end position="663"/>
    </location>
</feature>
<feature type="short sequence motif" description="Cysteine switch" evidence="1">
    <location>
        <begin position="171"/>
        <end position="178"/>
    </location>
</feature>
<feature type="active site" evidence="4 5">
    <location>
        <position position="343"/>
    </location>
</feature>
<feature type="binding site" description="in inhibited form" evidence="1">
    <location>
        <position position="173"/>
    </location>
    <ligand>
        <name>Zn(2+)</name>
        <dbReference type="ChEBI" id="CHEBI:29105"/>
        <note>catalytic</note>
    </ligand>
</feature>
<feature type="binding site" evidence="2">
    <location>
        <position position="342"/>
    </location>
    <ligand>
        <name>Zn(2+)</name>
        <dbReference type="ChEBI" id="CHEBI:29105"/>
        <note>catalytic</note>
    </ligand>
</feature>
<feature type="binding site" evidence="2">
    <location>
        <position position="346"/>
    </location>
    <ligand>
        <name>Zn(2+)</name>
        <dbReference type="ChEBI" id="CHEBI:29105"/>
        <note>catalytic</note>
    </ligand>
</feature>
<feature type="binding site" evidence="2">
    <location>
        <position position="352"/>
    </location>
    <ligand>
        <name>Zn(2+)</name>
        <dbReference type="ChEBI" id="CHEBI:29105"/>
        <note>catalytic</note>
    </ligand>
</feature>
<feature type="glycosylation site" description="N-linked (GlcNAc...) asparagine" evidence="2">
    <location>
        <position position="191"/>
    </location>
</feature>
<feature type="glycosylation site" description="N-linked (GlcNAc...) asparagine" evidence="2">
    <location>
        <position position="226"/>
    </location>
</feature>
<feature type="glycosylation site" description="N-linked (GlcNAc...) asparagine" evidence="2">
    <location>
        <position position="378"/>
    </location>
</feature>
<feature type="glycosylation site" description="N-linked (GlcNAc...) asparagine" evidence="2">
    <location>
        <position position="438"/>
    </location>
</feature>
<feature type="glycosylation site" description="N-linked (GlcNAc...) asparagine" evidence="2">
    <location>
        <position position="479"/>
    </location>
</feature>
<feature type="glycosylation site" description="N-linked (GlcNAc...) asparagine" evidence="2">
    <location>
        <position position="587"/>
    </location>
</feature>
<feature type="disulfide bond" evidence="1">
    <location>
        <begin position="317"/>
        <end position="394"/>
    </location>
</feature>
<feature type="disulfide bond" evidence="1">
    <location>
        <begin position="357"/>
        <end position="379"/>
    </location>
</feature>
<feature type="disulfide bond" evidence="1">
    <location>
        <begin position="359"/>
        <end position="364"/>
    </location>
</feature>
<feature type="disulfide bond" evidence="1">
    <location>
        <begin position="465"/>
        <end position="485"/>
    </location>
</feature>
<feature type="disulfide bond" evidence="1">
    <location>
        <begin position="635"/>
        <end position="646"/>
    </location>
</feature>
<feature type="disulfide bond" evidence="1">
    <location>
        <begin position="640"/>
        <end position="652"/>
    </location>
</feature>
<feature type="disulfide bond" evidence="1">
    <location>
        <begin position="654"/>
        <end position="663"/>
    </location>
</feature>
<feature type="sequence variant" id="VAR_047311" description="In dbSNP:rs1059166." evidence="6">
    <original>F</original>
    <variation>L</variation>
    <location>
        <position position="19"/>
    </location>
</feature>
<feature type="sequence conflict" description="In Ref. 1; AAC52041." evidence="7" ref="1">
    <original>C</original>
    <variation>W</variation>
    <location>
        <position position="109"/>
    </location>
</feature>
<feature type="sequence conflict" description="In Ref. 1; AAC52041." evidence="7" ref="1">
    <original>P</original>
    <variation>R</variation>
    <location>
        <position position="637"/>
    </location>
</feature>
<organism>
    <name type="scientific">Homo sapiens</name>
    <name type="common">Human</name>
    <dbReference type="NCBI Taxonomy" id="9606"/>
    <lineage>
        <taxon>Eukaryota</taxon>
        <taxon>Metazoa</taxon>
        <taxon>Chordata</taxon>
        <taxon>Craniata</taxon>
        <taxon>Vertebrata</taxon>
        <taxon>Euteleostomi</taxon>
        <taxon>Mammalia</taxon>
        <taxon>Eutheria</taxon>
        <taxon>Euarchontoglires</taxon>
        <taxon>Primates</taxon>
        <taxon>Haplorrhini</taxon>
        <taxon>Catarrhini</taxon>
        <taxon>Hominidae</taxon>
        <taxon>Homo</taxon>
    </lineage>
</organism>